<feature type="chain" id="PRO_0000353745" description="Cytochrome c biogenesis protein CcsA">
    <location>
        <begin position="1"/>
        <end position="308"/>
    </location>
</feature>
<feature type="transmembrane region" description="Helical" evidence="1">
    <location>
        <begin position="2"/>
        <end position="22"/>
    </location>
</feature>
<feature type="transmembrane region" description="Helical" evidence="1">
    <location>
        <begin position="44"/>
        <end position="64"/>
    </location>
</feature>
<feature type="transmembrane region" description="Helical" evidence="1">
    <location>
        <begin position="71"/>
        <end position="91"/>
    </location>
</feature>
<feature type="transmembrane region" description="Helical" evidence="1">
    <location>
        <begin position="143"/>
        <end position="163"/>
    </location>
</feature>
<feature type="transmembrane region" description="Helical" evidence="1">
    <location>
        <begin position="212"/>
        <end position="232"/>
    </location>
</feature>
<feature type="transmembrane region" description="Helical" evidence="1">
    <location>
        <begin position="239"/>
        <end position="259"/>
    </location>
</feature>
<feature type="transmembrane region" description="Helical" evidence="1">
    <location>
        <begin position="273"/>
        <end position="293"/>
    </location>
</feature>
<keyword id="KW-0201">Cytochrome c-type biogenesis</keyword>
<keyword id="KW-0472">Membrane</keyword>
<keyword id="KW-0934">Plastid</keyword>
<keyword id="KW-0812">Transmembrane</keyword>
<keyword id="KW-1133">Transmembrane helix</keyword>
<reference key="1">
    <citation type="journal article" date="2007" name="BMC Plant Biol.">
        <title>Complete plastid genome sequences suggest strong selection for retention of photosynthetic genes in the parasitic plant genus Cuscuta.</title>
        <authorList>
            <person name="McNeal J.R."/>
            <person name="Kuehl J.V."/>
            <person name="Boore J.L."/>
            <person name="dePamphilis C.W."/>
        </authorList>
    </citation>
    <scope>NUCLEOTIDE SEQUENCE [LARGE SCALE GENOMIC DNA]</scope>
</reference>
<gene>
    <name evidence="1" type="primary">ccsA</name>
</gene>
<evidence type="ECO:0000255" key="1">
    <source>
        <dbReference type="HAMAP-Rule" id="MF_01391"/>
    </source>
</evidence>
<evidence type="ECO:0000305" key="2"/>
<comment type="function">
    <text evidence="1">Required during biogenesis of c-type cytochromes (cytochrome c6 and cytochrome f) at the step of heme attachment.</text>
</comment>
<comment type="subunit">
    <text evidence="1">May interact with Ccs1.</text>
</comment>
<comment type="subcellular location">
    <subcellularLocation>
        <location evidence="2">Plastid membrane</location>
        <topology evidence="1">Multi-pass membrane protein</topology>
    </subcellularLocation>
</comment>
<comment type="similarity">
    <text evidence="1">Belongs to the CcmF/CycK/Ccl1/NrfE/CcsA family.</text>
</comment>
<comment type="caution">
    <text evidence="2">Young tissue from this organism is photosynthetic and contains some thylakoids, although the photosynthetic activity does not exceed the light compensation point.</text>
</comment>
<dbReference type="EMBL" id="EU189132">
    <property type="protein sequence ID" value="ABW83737.1"/>
    <property type="molecule type" value="Genomic_DNA"/>
</dbReference>
<dbReference type="RefSeq" id="YP_001542573.1">
    <property type="nucleotide sequence ID" value="NC_009963.1"/>
</dbReference>
<dbReference type="SMR" id="A8W3G6"/>
<dbReference type="GeneID" id="5729584"/>
<dbReference type="GO" id="GO:0005886">
    <property type="term" value="C:plasma membrane"/>
    <property type="evidence" value="ECO:0007669"/>
    <property type="project" value="TreeGrafter"/>
</dbReference>
<dbReference type="GO" id="GO:0042170">
    <property type="term" value="C:plastid membrane"/>
    <property type="evidence" value="ECO:0007669"/>
    <property type="project" value="UniProtKB-SubCell"/>
</dbReference>
<dbReference type="GO" id="GO:0042651">
    <property type="term" value="C:thylakoid membrane"/>
    <property type="evidence" value="ECO:0007669"/>
    <property type="project" value="UniProtKB-UniRule"/>
</dbReference>
<dbReference type="GO" id="GO:0020037">
    <property type="term" value="F:heme binding"/>
    <property type="evidence" value="ECO:0007669"/>
    <property type="project" value="InterPro"/>
</dbReference>
<dbReference type="GO" id="GO:0017004">
    <property type="term" value="P:cytochrome complex assembly"/>
    <property type="evidence" value="ECO:0007669"/>
    <property type="project" value="UniProtKB-UniRule"/>
</dbReference>
<dbReference type="HAMAP" id="MF_01391">
    <property type="entry name" value="CytC_CcsA"/>
    <property type="match status" value="1"/>
</dbReference>
<dbReference type="InterPro" id="IPR002541">
    <property type="entry name" value="Cyt_c_assembly"/>
</dbReference>
<dbReference type="InterPro" id="IPR017562">
    <property type="entry name" value="Cyt_c_biogenesis_CcsA"/>
</dbReference>
<dbReference type="InterPro" id="IPR045062">
    <property type="entry name" value="Cyt_c_biogenesis_CcsA/CcmC"/>
</dbReference>
<dbReference type="NCBIfam" id="TIGR03144">
    <property type="entry name" value="cytochr_II_ccsB"/>
    <property type="match status" value="1"/>
</dbReference>
<dbReference type="PANTHER" id="PTHR30071:SF1">
    <property type="entry name" value="CYTOCHROME B_B6 PROTEIN-RELATED"/>
    <property type="match status" value="1"/>
</dbReference>
<dbReference type="PANTHER" id="PTHR30071">
    <property type="entry name" value="HEME EXPORTER PROTEIN C"/>
    <property type="match status" value="1"/>
</dbReference>
<dbReference type="Pfam" id="PF01578">
    <property type="entry name" value="Cytochrom_C_asm"/>
    <property type="match status" value="1"/>
</dbReference>
<protein>
    <recommendedName>
        <fullName evidence="1">Cytochrome c biogenesis protein CcsA</fullName>
    </recommendedName>
</protein>
<organism>
    <name type="scientific">Cuscuta exaltata</name>
    <name type="common">Tall dodder</name>
    <dbReference type="NCBI Taxonomy" id="476139"/>
    <lineage>
        <taxon>Eukaryota</taxon>
        <taxon>Viridiplantae</taxon>
        <taxon>Streptophyta</taxon>
        <taxon>Embryophyta</taxon>
        <taxon>Tracheophyta</taxon>
        <taxon>Spermatophyta</taxon>
        <taxon>Magnoliopsida</taxon>
        <taxon>eudicotyledons</taxon>
        <taxon>Gunneridae</taxon>
        <taxon>Pentapetalae</taxon>
        <taxon>asterids</taxon>
        <taxon>lamiids</taxon>
        <taxon>Solanales</taxon>
        <taxon>Convolvulaceae</taxon>
        <taxon>Cuscuteae</taxon>
        <taxon>Cuscuta</taxon>
        <taxon>Cuscuta subgen. Monogynella</taxon>
    </lineage>
</organism>
<sequence length="308" mass="35013">MIVSTLEHILTHISFSIVSILITIKLRIFLADEIKKLYDSSERGMLVTFFCITGLLATHWIYLGHFPLSDLSESLIFLSWSFALIHSIAYFTKNTKLLSTITSQSTVFTQGFATSGILTEIQKSSILVPALQSEWLIMHVSLMILGYAALLCGSLLSVALMVITFRKDGKFFSKSKDFLFTEIFYKKIFVFNYNNYYKTQLIQELDFWSYQVIGLGFIFLTIGILSGAVWANEAWGSYWSWDPKETWAFITWIVFAIYLHTRKKRSLQGTNSAIVASIGFLIIWICYFGVNLVGLGLHSYGSFPSTSN</sequence>
<geneLocation type="plastid"/>
<name>CCSA_CUSEX</name>
<proteinExistence type="inferred from homology"/>
<accession>A8W3G6</accession>